<name>YCIB_RICAE</name>
<keyword id="KW-0997">Cell inner membrane</keyword>
<keyword id="KW-1003">Cell membrane</keyword>
<keyword id="KW-0472">Membrane</keyword>
<keyword id="KW-0812">Transmembrane</keyword>
<keyword id="KW-1133">Transmembrane helix</keyword>
<organism>
    <name type="scientific">Rickettsia africae (strain ESF-5)</name>
    <dbReference type="NCBI Taxonomy" id="347255"/>
    <lineage>
        <taxon>Bacteria</taxon>
        <taxon>Pseudomonadati</taxon>
        <taxon>Pseudomonadota</taxon>
        <taxon>Alphaproteobacteria</taxon>
        <taxon>Rickettsiales</taxon>
        <taxon>Rickettsiaceae</taxon>
        <taxon>Rickettsieae</taxon>
        <taxon>Rickettsia</taxon>
        <taxon>spotted fever group</taxon>
    </lineage>
</organism>
<accession>C3PNB2</accession>
<protein>
    <recommendedName>
        <fullName evidence="1">Inner membrane-spanning protein YciB</fullName>
    </recommendedName>
</protein>
<gene>
    <name evidence="1" type="primary">yciB</name>
    <name type="ordered locus">RAF_ORF0501</name>
</gene>
<sequence length="180" mass="20384">MLKLLSEIGPVIAFFAGFFYGGGIQHATLYMLITSVICITLCYVIDKKVSKLSIISTTVLLVSGSITLISGDSMYIKIKPTILYVIFGIIFLMSGIRKNPFIKYALESIVRLKEESWITLSYRTAAFFFFMAVVNEVVWRNCSDETWVKFKVFGVIPITFIFILLQLPLLLKNKLPDSKI</sequence>
<dbReference type="EMBL" id="CP001612">
    <property type="protein sequence ID" value="ACP53422.1"/>
    <property type="molecule type" value="Genomic_DNA"/>
</dbReference>
<dbReference type="RefSeq" id="WP_004995863.1">
    <property type="nucleotide sequence ID" value="NC_012633.1"/>
</dbReference>
<dbReference type="SMR" id="C3PNB2"/>
<dbReference type="KEGG" id="raf:RAF_ORF0501"/>
<dbReference type="HOGENOM" id="CLU_089554_1_1_5"/>
<dbReference type="Proteomes" id="UP000002305">
    <property type="component" value="Chromosome"/>
</dbReference>
<dbReference type="GO" id="GO:0005886">
    <property type="term" value="C:plasma membrane"/>
    <property type="evidence" value="ECO:0007669"/>
    <property type="project" value="UniProtKB-SubCell"/>
</dbReference>
<dbReference type="HAMAP" id="MF_00189">
    <property type="entry name" value="YciB"/>
    <property type="match status" value="1"/>
</dbReference>
<dbReference type="InterPro" id="IPR006008">
    <property type="entry name" value="YciB"/>
</dbReference>
<dbReference type="NCBIfam" id="TIGR00997">
    <property type="entry name" value="ispZ"/>
    <property type="match status" value="1"/>
</dbReference>
<dbReference type="NCBIfam" id="NF001323">
    <property type="entry name" value="PRK00259.1-1"/>
    <property type="match status" value="1"/>
</dbReference>
<dbReference type="PANTHER" id="PTHR36917:SF1">
    <property type="entry name" value="INNER MEMBRANE-SPANNING PROTEIN YCIB"/>
    <property type="match status" value="1"/>
</dbReference>
<dbReference type="PANTHER" id="PTHR36917">
    <property type="entry name" value="INTRACELLULAR SEPTATION PROTEIN A-RELATED"/>
    <property type="match status" value="1"/>
</dbReference>
<dbReference type="Pfam" id="PF04279">
    <property type="entry name" value="IspA"/>
    <property type="match status" value="1"/>
</dbReference>
<feature type="chain" id="PRO_1000203989" description="Inner membrane-spanning protein YciB">
    <location>
        <begin position="1"/>
        <end position="180"/>
    </location>
</feature>
<feature type="transmembrane region" description="Helical" evidence="1">
    <location>
        <begin position="4"/>
        <end position="24"/>
    </location>
</feature>
<feature type="transmembrane region" description="Helical" evidence="1">
    <location>
        <begin position="25"/>
        <end position="45"/>
    </location>
</feature>
<feature type="transmembrane region" description="Helical" evidence="1">
    <location>
        <begin position="49"/>
        <end position="69"/>
    </location>
</feature>
<feature type="transmembrane region" description="Helical" evidence="1">
    <location>
        <begin position="76"/>
        <end position="96"/>
    </location>
</feature>
<feature type="transmembrane region" description="Helical" evidence="1">
    <location>
        <begin position="118"/>
        <end position="138"/>
    </location>
</feature>
<feature type="transmembrane region" description="Helical" evidence="1">
    <location>
        <begin position="150"/>
        <end position="170"/>
    </location>
</feature>
<comment type="function">
    <text evidence="1">Plays a role in cell envelope biogenesis, maintenance of cell envelope integrity and membrane homeostasis.</text>
</comment>
<comment type="subcellular location">
    <subcellularLocation>
        <location evidence="1">Cell inner membrane</location>
        <topology evidence="1">Multi-pass membrane protein</topology>
    </subcellularLocation>
</comment>
<comment type="similarity">
    <text evidence="1">Belongs to the YciB family.</text>
</comment>
<reference key="1">
    <citation type="journal article" date="2009" name="BMC Genomics">
        <title>Analysis of the Rickettsia africae genome reveals that virulence acquisition in Rickettsia species may be explained by genome reduction.</title>
        <authorList>
            <person name="Fournier P.-E."/>
            <person name="El Karkouri K."/>
            <person name="Leroy Q."/>
            <person name="Robert C."/>
            <person name="Giumelli B."/>
            <person name="Renesto P."/>
            <person name="Socolovschi C."/>
            <person name="Parola P."/>
            <person name="Audic S."/>
            <person name="Raoult D."/>
        </authorList>
    </citation>
    <scope>NUCLEOTIDE SEQUENCE [LARGE SCALE GENOMIC DNA]</scope>
    <source>
        <strain>ESF-5</strain>
    </source>
</reference>
<evidence type="ECO:0000255" key="1">
    <source>
        <dbReference type="HAMAP-Rule" id="MF_00189"/>
    </source>
</evidence>
<proteinExistence type="inferred from homology"/>